<reference key="1">
    <citation type="journal article" date="2009" name="PLoS ONE">
        <title>Genome sequence of the endosymbiont Rickettsia peacockii and comparison with virulent Rickettsia rickettsii: identification of virulence factors.</title>
        <authorList>
            <person name="Felsheim R.F."/>
            <person name="Kurtti T.J."/>
            <person name="Munderloh U.G."/>
        </authorList>
    </citation>
    <scope>NUCLEOTIDE SEQUENCE [LARGE SCALE GENOMIC DNA]</scope>
    <source>
        <strain>Rustic</strain>
    </source>
</reference>
<name>UBIE_RICPU</name>
<evidence type="ECO:0000255" key="1">
    <source>
        <dbReference type="HAMAP-Rule" id="MF_01813"/>
    </source>
</evidence>
<gene>
    <name evidence="1" type="primary">ubiE</name>
    <name type="ordered locus">RPR_06415</name>
</gene>
<accession>C4K2K3</accession>
<proteinExistence type="inferred from homology"/>
<protein>
    <recommendedName>
        <fullName evidence="1">Ubiquinone/menaquinone biosynthesis C-methyltransferase UbiE</fullName>
        <ecNumber evidence="1">2.1.1.163</ecNumber>
        <ecNumber evidence="1">2.1.1.201</ecNumber>
    </recommendedName>
    <alternativeName>
        <fullName evidence="1">2-methoxy-6-polyprenyl-1,4-benzoquinol methylase</fullName>
    </alternativeName>
    <alternativeName>
        <fullName evidence="1">Demethylmenaquinone methyltransferase</fullName>
    </alternativeName>
</protein>
<organism>
    <name type="scientific">Rickettsia peacockii (strain Rustic)</name>
    <dbReference type="NCBI Taxonomy" id="562019"/>
    <lineage>
        <taxon>Bacteria</taxon>
        <taxon>Pseudomonadati</taxon>
        <taxon>Pseudomonadota</taxon>
        <taxon>Alphaproteobacteria</taxon>
        <taxon>Rickettsiales</taxon>
        <taxon>Rickettsiaceae</taxon>
        <taxon>Rickettsieae</taxon>
        <taxon>Rickettsia</taxon>
        <taxon>spotted fever group</taxon>
    </lineage>
</organism>
<sequence>MNQTNFGFKKVDYTKKQGLVNNVFSNVADKYDLMNDLMSLGLHRLWKDEFIRQIPNLNSHILDVASGSGDIALKLAKKARDRVNNISLTLSDINEEMLKQAKKKAIDLNLFQNLKFTVASAEELPFLDDSFDYYTIAFGIRNVPDINKALKEACRVLKPMGKFICLEFSKVKEGYMKDFYKFYSFNIIPSIGQMIAGNKEAYEYLVESIDLFPSQDEFRIMIKDAGFEEVGYKNLSGGIVAIHSAYTR</sequence>
<comment type="function">
    <text evidence="1">Methyltransferase required for the conversion of demethylmenaquinol (DMKH2) to menaquinol (MKH2) and the conversion of 2-polyprenyl-6-methoxy-1,4-benzoquinol (DDMQH2) to 2-polyprenyl-3-methyl-6-methoxy-1,4-benzoquinol (DMQH2).</text>
</comment>
<comment type="catalytic activity">
    <reaction evidence="1">
        <text>a 2-demethylmenaquinol + S-adenosyl-L-methionine = a menaquinol + S-adenosyl-L-homocysteine + H(+)</text>
        <dbReference type="Rhea" id="RHEA:42640"/>
        <dbReference type="Rhea" id="RHEA-COMP:9539"/>
        <dbReference type="Rhea" id="RHEA-COMP:9563"/>
        <dbReference type="ChEBI" id="CHEBI:15378"/>
        <dbReference type="ChEBI" id="CHEBI:18151"/>
        <dbReference type="ChEBI" id="CHEBI:55437"/>
        <dbReference type="ChEBI" id="CHEBI:57856"/>
        <dbReference type="ChEBI" id="CHEBI:59789"/>
        <dbReference type="EC" id="2.1.1.163"/>
    </reaction>
</comment>
<comment type="catalytic activity">
    <reaction evidence="1">
        <text>a 2-methoxy-6-(all-trans-polyprenyl)benzene-1,4-diol + S-adenosyl-L-methionine = a 5-methoxy-2-methyl-3-(all-trans-polyprenyl)benzene-1,4-diol + S-adenosyl-L-homocysteine + H(+)</text>
        <dbReference type="Rhea" id="RHEA:28286"/>
        <dbReference type="Rhea" id="RHEA-COMP:10858"/>
        <dbReference type="Rhea" id="RHEA-COMP:10859"/>
        <dbReference type="ChEBI" id="CHEBI:15378"/>
        <dbReference type="ChEBI" id="CHEBI:57856"/>
        <dbReference type="ChEBI" id="CHEBI:59789"/>
        <dbReference type="ChEBI" id="CHEBI:84166"/>
        <dbReference type="ChEBI" id="CHEBI:84167"/>
        <dbReference type="EC" id="2.1.1.201"/>
    </reaction>
</comment>
<comment type="pathway">
    <text evidence="1">Quinol/quinone metabolism; menaquinone biosynthesis; menaquinol from 1,4-dihydroxy-2-naphthoate: step 2/2.</text>
</comment>
<comment type="pathway">
    <text evidence="1">Cofactor biosynthesis; ubiquinone biosynthesis.</text>
</comment>
<comment type="similarity">
    <text evidence="1">Belongs to the class I-like SAM-binding methyltransferase superfamily. MenG/UbiE family.</text>
</comment>
<keyword id="KW-0474">Menaquinone biosynthesis</keyword>
<keyword id="KW-0489">Methyltransferase</keyword>
<keyword id="KW-0949">S-adenosyl-L-methionine</keyword>
<keyword id="KW-0808">Transferase</keyword>
<keyword id="KW-0831">Ubiquinone biosynthesis</keyword>
<dbReference type="EC" id="2.1.1.163" evidence="1"/>
<dbReference type="EC" id="2.1.1.201" evidence="1"/>
<dbReference type="EMBL" id="CP001227">
    <property type="protein sequence ID" value="ACR47800.1"/>
    <property type="molecule type" value="Genomic_DNA"/>
</dbReference>
<dbReference type="RefSeq" id="WP_012736968.1">
    <property type="nucleotide sequence ID" value="NC_012730.1"/>
</dbReference>
<dbReference type="SMR" id="C4K2K3"/>
<dbReference type="KEGG" id="rpk:RPR_06415"/>
<dbReference type="HOGENOM" id="CLU_037990_0_1_5"/>
<dbReference type="UniPathway" id="UPA00079">
    <property type="reaction ID" value="UER00169"/>
</dbReference>
<dbReference type="UniPathway" id="UPA00232"/>
<dbReference type="Proteomes" id="UP000005015">
    <property type="component" value="Chromosome"/>
</dbReference>
<dbReference type="GO" id="GO:0008425">
    <property type="term" value="F:2-methoxy-6-polyprenyl-1,4-benzoquinol methyltransferase activity"/>
    <property type="evidence" value="ECO:0007669"/>
    <property type="project" value="UniProtKB-UniRule"/>
</dbReference>
<dbReference type="GO" id="GO:0043770">
    <property type="term" value="F:demethylmenaquinone methyltransferase activity"/>
    <property type="evidence" value="ECO:0007669"/>
    <property type="project" value="UniProtKB-UniRule"/>
</dbReference>
<dbReference type="GO" id="GO:0009060">
    <property type="term" value="P:aerobic respiration"/>
    <property type="evidence" value="ECO:0007669"/>
    <property type="project" value="UniProtKB-UniRule"/>
</dbReference>
<dbReference type="GO" id="GO:0009234">
    <property type="term" value="P:menaquinone biosynthetic process"/>
    <property type="evidence" value="ECO:0007669"/>
    <property type="project" value="UniProtKB-UniRule"/>
</dbReference>
<dbReference type="GO" id="GO:0032259">
    <property type="term" value="P:methylation"/>
    <property type="evidence" value="ECO:0007669"/>
    <property type="project" value="UniProtKB-KW"/>
</dbReference>
<dbReference type="CDD" id="cd02440">
    <property type="entry name" value="AdoMet_MTases"/>
    <property type="match status" value="1"/>
</dbReference>
<dbReference type="FunFam" id="3.40.50.150:FF:000250">
    <property type="entry name" value="Ubiquinone/menaquinone biosynthesis C-methyltransferase UbiE"/>
    <property type="match status" value="1"/>
</dbReference>
<dbReference type="Gene3D" id="3.40.50.150">
    <property type="entry name" value="Vaccinia Virus protein VP39"/>
    <property type="match status" value="1"/>
</dbReference>
<dbReference type="HAMAP" id="MF_01813">
    <property type="entry name" value="MenG_UbiE_methyltr"/>
    <property type="match status" value="1"/>
</dbReference>
<dbReference type="InterPro" id="IPR029063">
    <property type="entry name" value="SAM-dependent_MTases_sf"/>
</dbReference>
<dbReference type="InterPro" id="IPR004033">
    <property type="entry name" value="UbiE/COQ5_MeTrFase"/>
</dbReference>
<dbReference type="InterPro" id="IPR023576">
    <property type="entry name" value="UbiE/COQ5_MeTrFase_CS"/>
</dbReference>
<dbReference type="NCBIfam" id="TIGR01934">
    <property type="entry name" value="MenG_MenH_UbiE"/>
    <property type="match status" value="1"/>
</dbReference>
<dbReference type="NCBIfam" id="NF001242">
    <property type="entry name" value="PRK00216.1-3"/>
    <property type="match status" value="1"/>
</dbReference>
<dbReference type="NCBIfam" id="NF001244">
    <property type="entry name" value="PRK00216.1-5"/>
    <property type="match status" value="1"/>
</dbReference>
<dbReference type="PANTHER" id="PTHR43591:SF24">
    <property type="entry name" value="2-METHOXY-6-POLYPRENYL-1,4-BENZOQUINOL METHYLASE, MITOCHONDRIAL"/>
    <property type="match status" value="1"/>
</dbReference>
<dbReference type="PANTHER" id="PTHR43591">
    <property type="entry name" value="METHYLTRANSFERASE"/>
    <property type="match status" value="1"/>
</dbReference>
<dbReference type="Pfam" id="PF01209">
    <property type="entry name" value="Ubie_methyltran"/>
    <property type="match status" value="1"/>
</dbReference>
<dbReference type="SUPFAM" id="SSF53335">
    <property type="entry name" value="S-adenosyl-L-methionine-dependent methyltransferases"/>
    <property type="match status" value="1"/>
</dbReference>
<dbReference type="PROSITE" id="PS51608">
    <property type="entry name" value="SAM_MT_UBIE"/>
    <property type="match status" value="1"/>
</dbReference>
<dbReference type="PROSITE" id="PS01183">
    <property type="entry name" value="UBIE_1"/>
    <property type="match status" value="1"/>
</dbReference>
<dbReference type="PROSITE" id="PS01184">
    <property type="entry name" value="UBIE_2"/>
    <property type="match status" value="1"/>
</dbReference>
<feature type="chain" id="PRO_1000215991" description="Ubiquinone/menaquinone biosynthesis C-methyltransferase UbiE">
    <location>
        <begin position="1"/>
        <end position="248"/>
    </location>
</feature>
<feature type="binding site" evidence="1">
    <location>
        <position position="68"/>
    </location>
    <ligand>
        <name>S-adenosyl-L-methionine</name>
        <dbReference type="ChEBI" id="CHEBI:59789"/>
    </ligand>
</feature>
<feature type="binding site" evidence="1">
    <location>
        <position position="92"/>
    </location>
    <ligand>
        <name>S-adenosyl-L-methionine</name>
        <dbReference type="ChEBI" id="CHEBI:59789"/>
    </ligand>
</feature>